<evidence type="ECO:0000255" key="1">
    <source>
        <dbReference type="HAMAP-Rule" id="MF_01589"/>
    </source>
</evidence>
<accession>Q5E6A3</accession>
<keyword id="KW-1185">Reference proteome</keyword>
<keyword id="KW-0949">S-adenosyl-L-methionine</keyword>
<keyword id="KW-0808">Transferase</keyword>
<gene>
    <name evidence="1" type="primary">cmoA</name>
    <name type="ordered locus">VF_0948</name>
</gene>
<sequence length="242" mass="27221">MANPDTIFSTPIDKIGDFTFDERVAEVFPDMIQRSIPGYSNIISAIGMLAERYAKPHSNVYDLGCSLGAATLSMRRSIDQEGCQIIGVDNSSAMVERCRLLINAYRSDTPVTILEADIRDVDIQDASVVVLNFTLQFLAPADRHALLEKIYAGLRPGGILILSEKYIFEDENANELLIDLHHDFKRANGYSELEISQKRSAIENVMLPDTIDVHKKRFNEIGFKSSEVWFQCFNFGSMFAIK</sequence>
<comment type="function">
    <text evidence="1">Catalyzes the conversion of S-adenosyl-L-methionine (SAM) to carboxy-S-adenosyl-L-methionine (Cx-SAM).</text>
</comment>
<comment type="catalytic activity">
    <reaction evidence="1">
        <text>prephenate + S-adenosyl-L-methionine = carboxy-S-adenosyl-L-methionine + 3-phenylpyruvate + H2O</text>
        <dbReference type="Rhea" id="RHEA:51692"/>
        <dbReference type="ChEBI" id="CHEBI:15377"/>
        <dbReference type="ChEBI" id="CHEBI:18005"/>
        <dbReference type="ChEBI" id="CHEBI:29934"/>
        <dbReference type="ChEBI" id="CHEBI:59789"/>
        <dbReference type="ChEBI" id="CHEBI:134278"/>
    </reaction>
</comment>
<comment type="subunit">
    <text evidence="1">Homodimer.</text>
</comment>
<comment type="similarity">
    <text evidence="1">Belongs to the class I-like SAM-binding methyltransferase superfamily. Cx-SAM synthase family.</text>
</comment>
<organism>
    <name type="scientific">Aliivibrio fischeri (strain ATCC 700601 / ES114)</name>
    <name type="common">Vibrio fischeri</name>
    <dbReference type="NCBI Taxonomy" id="312309"/>
    <lineage>
        <taxon>Bacteria</taxon>
        <taxon>Pseudomonadati</taxon>
        <taxon>Pseudomonadota</taxon>
        <taxon>Gammaproteobacteria</taxon>
        <taxon>Vibrionales</taxon>
        <taxon>Vibrionaceae</taxon>
        <taxon>Aliivibrio</taxon>
    </lineage>
</organism>
<dbReference type="EC" id="2.1.3.-" evidence="1"/>
<dbReference type="EMBL" id="CP000020">
    <property type="protein sequence ID" value="AAW85443.1"/>
    <property type="molecule type" value="Genomic_DNA"/>
</dbReference>
<dbReference type="RefSeq" id="WP_011261594.1">
    <property type="nucleotide sequence ID" value="NC_006840.2"/>
</dbReference>
<dbReference type="RefSeq" id="YP_204331.1">
    <property type="nucleotide sequence ID" value="NC_006840.2"/>
</dbReference>
<dbReference type="SMR" id="Q5E6A3"/>
<dbReference type="STRING" id="312309.VF_0948"/>
<dbReference type="EnsemblBacteria" id="AAW85443">
    <property type="protein sequence ID" value="AAW85443"/>
    <property type="gene ID" value="VF_0948"/>
</dbReference>
<dbReference type="GeneID" id="54163618"/>
<dbReference type="KEGG" id="vfi:VF_0948"/>
<dbReference type="PATRIC" id="fig|312309.11.peg.946"/>
<dbReference type="eggNOG" id="COG4106">
    <property type="taxonomic scope" value="Bacteria"/>
</dbReference>
<dbReference type="HOGENOM" id="CLU_078475_0_0_6"/>
<dbReference type="OrthoDB" id="9779941at2"/>
<dbReference type="Proteomes" id="UP000000537">
    <property type="component" value="Chromosome I"/>
</dbReference>
<dbReference type="GO" id="GO:0016743">
    <property type="term" value="F:carboxyl- or carbamoyltransferase activity"/>
    <property type="evidence" value="ECO:0007669"/>
    <property type="project" value="UniProtKB-UniRule"/>
</dbReference>
<dbReference type="GO" id="GO:1904047">
    <property type="term" value="F:S-adenosyl-L-methionine binding"/>
    <property type="evidence" value="ECO:0007669"/>
    <property type="project" value="UniProtKB-UniRule"/>
</dbReference>
<dbReference type="GO" id="GO:0002098">
    <property type="term" value="P:tRNA wobble uridine modification"/>
    <property type="evidence" value="ECO:0007669"/>
    <property type="project" value="InterPro"/>
</dbReference>
<dbReference type="CDD" id="cd02440">
    <property type="entry name" value="AdoMet_MTases"/>
    <property type="match status" value="1"/>
</dbReference>
<dbReference type="Gene3D" id="3.40.50.150">
    <property type="entry name" value="Vaccinia Virus protein VP39"/>
    <property type="match status" value="1"/>
</dbReference>
<dbReference type="HAMAP" id="MF_01589">
    <property type="entry name" value="Cx_SAM_synthase"/>
    <property type="match status" value="1"/>
</dbReference>
<dbReference type="InterPro" id="IPR005271">
    <property type="entry name" value="CmoA"/>
</dbReference>
<dbReference type="InterPro" id="IPR041698">
    <property type="entry name" value="Methyltransf_25"/>
</dbReference>
<dbReference type="InterPro" id="IPR029063">
    <property type="entry name" value="SAM-dependent_MTases_sf"/>
</dbReference>
<dbReference type="NCBIfam" id="TIGR00740">
    <property type="entry name" value="carboxy-S-adenosyl-L-methionine synthase CmoA"/>
    <property type="match status" value="1"/>
</dbReference>
<dbReference type="NCBIfam" id="NF011995">
    <property type="entry name" value="PRK15451.1"/>
    <property type="match status" value="1"/>
</dbReference>
<dbReference type="PANTHER" id="PTHR43861:SF2">
    <property type="entry name" value="CARBOXY-S-ADENOSYL-L-METHIONINE SYNTHASE"/>
    <property type="match status" value="1"/>
</dbReference>
<dbReference type="PANTHER" id="PTHR43861">
    <property type="entry name" value="TRANS-ACONITATE 2-METHYLTRANSFERASE-RELATED"/>
    <property type="match status" value="1"/>
</dbReference>
<dbReference type="Pfam" id="PF13649">
    <property type="entry name" value="Methyltransf_25"/>
    <property type="match status" value="1"/>
</dbReference>
<dbReference type="PIRSF" id="PIRSF006325">
    <property type="entry name" value="MeTrfase_bac"/>
    <property type="match status" value="1"/>
</dbReference>
<dbReference type="SUPFAM" id="SSF53335">
    <property type="entry name" value="S-adenosyl-L-methionine-dependent methyltransferases"/>
    <property type="match status" value="1"/>
</dbReference>
<feature type="chain" id="PRO_0000314399" description="Carboxy-S-adenosyl-L-methionine synthase">
    <location>
        <begin position="1"/>
        <end position="242"/>
    </location>
</feature>
<feature type="binding site" evidence="1">
    <location>
        <position position="39"/>
    </location>
    <ligand>
        <name>S-adenosyl-L-methionine</name>
        <dbReference type="ChEBI" id="CHEBI:59789"/>
    </ligand>
</feature>
<feature type="binding site" evidence="1">
    <location>
        <begin position="64"/>
        <end position="66"/>
    </location>
    <ligand>
        <name>S-adenosyl-L-methionine</name>
        <dbReference type="ChEBI" id="CHEBI:59789"/>
    </ligand>
</feature>
<feature type="binding site" evidence="1">
    <location>
        <begin position="89"/>
        <end position="90"/>
    </location>
    <ligand>
        <name>S-adenosyl-L-methionine</name>
        <dbReference type="ChEBI" id="CHEBI:59789"/>
    </ligand>
</feature>
<feature type="binding site" evidence="1">
    <location>
        <begin position="117"/>
        <end position="118"/>
    </location>
    <ligand>
        <name>S-adenosyl-L-methionine</name>
        <dbReference type="ChEBI" id="CHEBI:59789"/>
    </ligand>
</feature>
<feature type="binding site" evidence="1">
    <location>
        <position position="132"/>
    </location>
    <ligand>
        <name>S-adenosyl-L-methionine</name>
        <dbReference type="ChEBI" id="CHEBI:59789"/>
    </ligand>
</feature>
<feature type="binding site" evidence="1">
    <location>
        <position position="199"/>
    </location>
    <ligand>
        <name>S-adenosyl-L-methionine</name>
        <dbReference type="ChEBI" id="CHEBI:59789"/>
    </ligand>
</feature>
<reference key="1">
    <citation type="journal article" date="2005" name="Proc. Natl. Acad. Sci. U.S.A.">
        <title>Complete genome sequence of Vibrio fischeri: a symbiotic bacterium with pathogenic congeners.</title>
        <authorList>
            <person name="Ruby E.G."/>
            <person name="Urbanowski M."/>
            <person name="Campbell J."/>
            <person name="Dunn A."/>
            <person name="Faini M."/>
            <person name="Gunsalus R."/>
            <person name="Lostroh P."/>
            <person name="Lupp C."/>
            <person name="McCann J."/>
            <person name="Millikan D."/>
            <person name="Schaefer A."/>
            <person name="Stabb E."/>
            <person name="Stevens A."/>
            <person name="Visick K."/>
            <person name="Whistler C."/>
            <person name="Greenberg E.P."/>
        </authorList>
    </citation>
    <scope>NUCLEOTIDE SEQUENCE [LARGE SCALE GENOMIC DNA]</scope>
    <source>
        <strain>ATCC 700601 / ES114</strain>
    </source>
</reference>
<protein>
    <recommendedName>
        <fullName evidence="1">Carboxy-S-adenosyl-L-methionine synthase</fullName>
        <shortName evidence="1">Cx-SAM synthase</shortName>
        <ecNumber evidence="1">2.1.3.-</ecNumber>
    </recommendedName>
</protein>
<proteinExistence type="inferred from homology"/>
<name>CMOA_ALIF1</name>